<dbReference type="EC" id="2.7.10.2"/>
<dbReference type="EMBL" id="M73237">
    <property type="protein sequence ID" value="AAA31112.1"/>
    <property type="molecule type" value="mRNA"/>
</dbReference>
<dbReference type="PIR" id="A40802">
    <property type="entry name" value="A40802"/>
</dbReference>
<dbReference type="RefSeq" id="NP_001098422.1">
    <property type="nucleotide sequence ID" value="NM_001104952.1"/>
</dbReference>
<dbReference type="SMR" id="Q00655"/>
<dbReference type="FunCoup" id="Q00655">
    <property type="interactions" value="263"/>
</dbReference>
<dbReference type="IntAct" id="Q00655">
    <property type="interactions" value="1"/>
</dbReference>
<dbReference type="MINT" id="Q00655"/>
<dbReference type="STRING" id="9823.ENSSSCP00000033634"/>
<dbReference type="iPTMnet" id="Q00655"/>
<dbReference type="PaxDb" id="9823-ENSSSCP00000010237"/>
<dbReference type="GeneID" id="100125540"/>
<dbReference type="KEGG" id="ssc:100125540"/>
<dbReference type="CTD" id="6850"/>
<dbReference type="eggNOG" id="ENOG502QT06">
    <property type="taxonomic scope" value="Eukaryota"/>
</dbReference>
<dbReference type="InParanoid" id="Q00655"/>
<dbReference type="OrthoDB" id="535945at2759"/>
<dbReference type="BRENDA" id="2.7.10.2">
    <property type="organism ID" value="6170"/>
</dbReference>
<dbReference type="Proteomes" id="UP000008227">
    <property type="component" value="Unplaced"/>
</dbReference>
<dbReference type="Proteomes" id="UP000314985">
    <property type="component" value="Unplaced"/>
</dbReference>
<dbReference type="Proteomes" id="UP000694570">
    <property type="component" value="Unplaced"/>
</dbReference>
<dbReference type="Proteomes" id="UP000694571">
    <property type="component" value="Unplaced"/>
</dbReference>
<dbReference type="Proteomes" id="UP000694720">
    <property type="component" value="Unplaced"/>
</dbReference>
<dbReference type="Proteomes" id="UP000694722">
    <property type="component" value="Unplaced"/>
</dbReference>
<dbReference type="Proteomes" id="UP000694723">
    <property type="component" value="Unplaced"/>
</dbReference>
<dbReference type="Proteomes" id="UP000694724">
    <property type="component" value="Unplaced"/>
</dbReference>
<dbReference type="Proteomes" id="UP000694725">
    <property type="component" value="Unplaced"/>
</dbReference>
<dbReference type="Proteomes" id="UP000694726">
    <property type="component" value="Unplaced"/>
</dbReference>
<dbReference type="Proteomes" id="UP000694727">
    <property type="component" value="Unplaced"/>
</dbReference>
<dbReference type="Proteomes" id="UP000694728">
    <property type="component" value="Unplaced"/>
</dbReference>
<dbReference type="GO" id="GO:0005829">
    <property type="term" value="C:cytosol"/>
    <property type="evidence" value="ECO:0000304"/>
    <property type="project" value="Reactome"/>
</dbReference>
<dbReference type="GO" id="GO:0032009">
    <property type="term" value="C:early phagosome"/>
    <property type="evidence" value="ECO:0000250"/>
    <property type="project" value="UniProtKB"/>
</dbReference>
<dbReference type="GO" id="GO:0005886">
    <property type="term" value="C:plasma membrane"/>
    <property type="evidence" value="ECO:0000318"/>
    <property type="project" value="GO_Central"/>
</dbReference>
<dbReference type="GO" id="GO:0005524">
    <property type="term" value="F:ATP binding"/>
    <property type="evidence" value="ECO:0007669"/>
    <property type="project" value="UniProtKB-KW"/>
</dbReference>
<dbReference type="GO" id="GO:0004715">
    <property type="term" value="F:non-membrane spanning protein tyrosine kinase activity"/>
    <property type="evidence" value="ECO:0000250"/>
    <property type="project" value="UniProtKB"/>
</dbReference>
<dbReference type="GO" id="GO:0004713">
    <property type="term" value="F:protein tyrosine kinase activity"/>
    <property type="evidence" value="ECO:0000318"/>
    <property type="project" value="GO_Central"/>
</dbReference>
<dbReference type="GO" id="GO:0002250">
    <property type="term" value="P:adaptive immune response"/>
    <property type="evidence" value="ECO:0000250"/>
    <property type="project" value="UniProtKB"/>
</dbReference>
<dbReference type="GO" id="GO:0001525">
    <property type="term" value="P:angiogenesis"/>
    <property type="evidence" value="ECO:0007669"/>
    <property type="project" value="UniProtKB-KW"/>
</dbReference>
<dbReference type="GO" id="GO:0050853">
    <property type="term" value="P:B cell receptor signaling pathway"/>
    <property type="evidence" value="ECO:0000250"/>
    <property type="project" value="UniProtKB"/>
</dbReference>
<dbReference type="GO" id="GO:0048514">
    <property type="term" value="P:blood vessel morphogenesis"/>
    <property type="evidence" value="ECO:0000250"/>
    <property type="project" value="UniProtKB"/>
</dbReference>
<dbReference type="GO" id="GO:0071404">
    <property type="term" value="P:cellular response to low-density lipoprotein particle stimulus"/>
    <property type="evidence" value="ECO:0000250"/>
    <property type="project" value="UniProtKB"/>
</dbReference>
<dbReference type="GO" id="GO:0071226">
    <property type="term" value="P:cellular response to molecule of fungal origin"/>
    <property type="evidence" value="ECO:0000250"/>
    <property type="project" value="UniProtKB"/>
</dbReference>
<dbReference type="GO" id="GO:0042742">
    <property type="term" value="P:defense response to bacterium"/>
    <property type="evidence" value="ECO:0000250"/>
    <property type="project" value="UniProtKB"/>
</dbReference>
<dbReference type="GO" id="GO:0045087">
    <property type="term" value="P:innate immune response"/>
    <property type="evidence" value="ECO:0000250"/>
    <property type="project" value="UniProtKB"/>
</dbReference>
<dbReference type="GO" id="GO:0007229">
    <property type="term" value="P:integrin-mediated signaling pathway"/>
    <property type="evidence" value="ECO:0000250"/>
    <property type="project" value="UniProtKB"/>
</dbReference>
<dbReference type="GO" id="GO:0038156">
    <property type="term" value="P:interleukin-3-mediated signaling pathway"/>
    <property type="evidence" value="ECO:0000250"/>
    <property type="project" value="UniProtKB"/>
</dbReference>
<dbReference type="GO" id="GO:0035556">
    <property type="term" value="P:intracellular signal transduction"/>
    <property type="evidence" value="ECO:0007669"/>
    <property type="project" value="InterPro"/>
</dbReference>
<dbReference type="GO" id="GO:0002366">
    <property type="term" value="P:leukocyte activation involved in immune response"/>
    <property type="evidence" value="ECO:0000250"/>
    <property type="project" value="UniProtKB"/>
</dbReference>
<dbReference type="GO" id="GO:0007159">
    <property type="term" value="P:leukocyte cell-cell adhesion"/>
    <property type="evidence" value="ECO:0000250"/>
    <property type="project" value="UniProtKB"/>
</dbReference>
<dbReference type="GO" id="GO:0001945">
    <property type="term" value="P:lymph vessel development"/>
    <property type="evidence" value="ECO:0000250"/>
    <property type="project" value="UniProtKB"/>
</dbReference>
<dbReference type="GO" id="GO:0002281">
    <property type="term" value="P:macrophage activation involved in immune response"/>
    <property type="evidence" value="ECO:0000250"/>
    <property type="project" value="UniProtKB"/>
</dbReference>
<dbReference type="GO" id="GO:0002283">
    <property type="term" value="P:neutrophil activation involved in immune response"/>
    <property type="evidence" value="ECO:0000250"/>
    <property type="project" value="UniProtKB"/>
</dbReference>
<dbReference type="GO" id="GO:0030593">
    <property type="term" value="P:neutrophil chemotaxis"/>
    <property type="evidence" value="ECO:0000250"/>
    <property type="project" value="UniProtKB"/>
</dbReference>
<dbReference type="GO" id="GO:0018108">
    <property type="term" value="P:peptidyl-tyrosine phosphorylation"/>
    <property type="evidence" value="ECO:0000250"/>
    <property type="project" value="UniProtKB"/>
</dbReference>
<dbReference type="GO" id="GO:0045780">
    <property type="term" value="P:positive regulation of bone resorption"/>
    <property type="evidence" value="ECO:0000250"/>
    <property type="project" value="UniProtKB"/>
</dbReference>
<dbReference type="GO" id="GO:0033630">
    <property type="term" value="P:positive regulation of cell adhesion mediated by integrin"/>
    <property type="evidence" value="ECO:0000250"/>
    <property type="project" value="UniProtKB"/>
</dbReference>
<dbReference type="GO" id="GO:0032753">
    <property type="term" value="P:positive regulation of interleukin-4 production"/>
    <property type="evidence" value="ECO:0000250"/>
    <property type="project" value="UniProtKB"/>
</dbReference>
<dbReference type="GO" id="GO:0031623">
    <property type="term" value="P:receptor internalization"/>
    <property type="evidence" value="ECO:0000250"/>
    <property type="project" value="UniProtKB"/>
</dbReference>
<dbReference type="GO" id="GO:0090237">
    <property type="term" value="P:regulation of arachidonate secretion"/>
    <property type="evidence" value="ECO:0000250"/>
    <property type="project" value="UniProtKB"/>
</dbReference>
<dbReference type="GO" id="GO:0070372">
    <property type="term" value="P:regulation of ERK1 and ERK2 cascade"/>
    <property type="evidence" value="ECO:0000250"/>
    <property type="project" value="UniProtKB"/>
</dbReference>
<dbReference type="GO" id="GO:0043313">
    <property type="term" value="P:regulation of neutrophil degranulation"/>
    <property type="evidence" value="ECO:0000250"/>
    <property type="project" value="UniProtKB"/>
</dbReference>
<dbReference type="GO" id="GO:0050764">
    <property type="term" value="P:regulation of phagocytosis"/>
    <property type="evidence" value="ECO:0000250"/>
    <property type="project" value="UniProtKB"/>
</dbReference>
<dbReference type="GO" id="GO:0010543">
    <property type="term" value="P:regulation of platelet activation"/>
    <property type="evidence" value="ECO:0000250"/>
    <property type="project" value="UniProtKB"/>
</dbReference>
<dbReference type="GO" id="GO:0090330">
    <property type="term" value="P:regulation of platelet aggregation"/>
    <property type="evidence" value="ECO:0000250"/>
    <property type="project" value="UniProtKB"/>
</dbReference>
<dbReference type="GO" id="GO:0032928">
    <property type="term" value="P:regulation of superoxide anion generation"/>
    <property type="evidence" value="ECO:0000250"/>
    <property type="project" value="UniProtKB"/>
</dbReference>
<dbReference type="GO" id="GO:0002554">
    <property type="term" value="P:serotonin secretion by platelet"/>
    <property type="evidence" value="ECO:0000250"/>
    <property type="project" value="UniProtKB"/>
</dbReference>
<dbReference type="CDD" id="cd05116">
    <property type="entry name" value="PTKc_Syk"/>
    <property type="match status" value="1"/>
</dbReference>
<dbReference type="CDD" id="cd09938">
    <property type="entry name" value="SH2_N-SH2_Zap70_Syk_like"/>
    <property type="match status" value="1"/>
</dbReference>
<dbReference type="FunFam" id="1.10.930.10:FF:000001">
    <property type="entry name" value="Tyrosine-protein kinase"/>
    <property type="match status" value="1"/>
</dbReference>
<dbReference type="FunFam" id="3.30.200.20:FF:000185">
    <property type="entry name" value="Tyrosine-protein kinase"/>
    <property type="match status" value="1"/>
</dbReference>
<dbReference type="FunFam" id="3.30.505.10:FF:000031">
    <property type="entry name" value="Tyrosine-protein kinase"/>
    <property type="match status" value="1"/>
</dbReference>
<dbReference type="FunFam" id="3.30.505.10:FF:000038">
    <property type="entry name" value="Tyrosine-protein kinase"/>
    <property type="match status" value="1"/>
</dbReference>
<dbReference type="FunFam" id="1.10.510.10:FF:000216">
    <property type="entry name" value="Tyrosine-protein kinase SYK"/>
    <property type="match status" value="1"/>
</dbReference>
<dbReference type="Gene3D" id="3.30.200.20">
    <property type="entry name" value="Phosphorylase Kinase, domain 1"/>
    <property type="match status" value="1"/>
</dbReference>
<dbReference type="Gene3D" id="3.30.505.10">
    <property type="entry name" value="SH2 domain"/>
    <property type="match status" value="2"/>
</dbReference>
<dbReference type="Gene3D" id="1.10.930.10">
    <property type="entry name" value="Syk Kinase, Chain A, domain 2"/>
    <property type="match status" value="1"/>
</dbReference>
<dbReference type="Gene3D" id="1.10.510.10">
    <property type="entry name" value="Transferase(Phosphotransferase) domain 1"/>
    <property type="match status" value="1"/>
</dbReference>
<dbReference type="InterPro" id="IPR011009">
    <property type="entry name" value="Kinase-like_dom_sf"/>
</dbReference>
<dbReference type="InterPro" id="IPR023420">
    <property type="entry name" value="Kinase_SYK/ZAP-70_inter-SH2_sf"/>
</dbReference>
<dbReference type="InterPro" id="IPR050198">
    <property type="entry name" value="Non-receptor_tyrosine_kinases"/>
</dbReference>
<dbReference type="InterPro" id="IPR000719">
    <property type="entry name" value="Prot_kinase_dom"/>
</dbReference>
<dbReference type="InterPro" id="IPR017441">
    <property type="entry name" value="Protein_kinase_ATP_BS"/>
</dbReference>
<dbReference type="InterPro" id="IPR001245">
    <property type="entry name" value="Ser-Thr/Tyr_kinase_cat_dom"/>
</dbReference>
<dbReference type="InterPro" id="IPR000980">
    <property type="entry name" value="SH2"/>
</dbReference>
<dbReference type="InterPro" id="IPR036860">
    <property type="entry name" value="SH2_dom_sf"/>
</dbReference>
<dbReference type="InterPro" id="IPR035838">
    <property type="entry name" value="SYK/ZAP-70_N_SH2"/>
</dbReference>
<dbReference type="InterPro" id="IPR008266">
    <property type="entry name" value="Tyr_kinase_AS"/>
</dbReference>
<dbReference type="InterPro" id="IPR020635">
    <property type="entry name" value="Tyr_kinase_cat_dom"/>
</dbReference>
<dbReference type="InterPro" id="IPR012234">
    <property type="entry name" value="Tyr_kinase_non-rcpt_SYK/ZAP70"/>
</dbReference>
<dbReference type="PANTHER" id="PTHR24418">
    <property type="entry name" value="TYROSINE-PROTEIN KINASE"/>
    <property type="match status" value="1"/>
</dbReference>
<dbReference type="Pfam" id="PF07714">
    <property type="entry name" value="PK_Tyr_Ser-Thr"/>
    <property type="match status" value="1"/>
</dbReference>
<dbReference type="Pfam" id="PF00017">
    <property type="entry name" value="SH2"/>
    <property type="match status" value="2"/>
</dbReference>
<dbReference type="PIRSF" id="PIRSF000604">
    <property type="entry name" value="TyrPK_SYK"/>
    <property type="match status" value="1"/>
</dbReference>
<dbReference type="PRINTS" id="PR00401">
    <property type="entry name" value="SH2DOMAIN"/>
</dbReference>
<dbReference type="PRINTS" id="PR00109">
    <property type="entry name" value="TYRKINASE"/>
</dbReference>
<dbReference type="SMART" id="SM00252">
    <property type="entry name" value="SH2"/>
    <property type="match status" value="2"/>
</dbReference>
<dbReference type="SMART" id="SM00219">
    <property type="entry name" value="TyrKc"/>
    <property type="match status" value="1"/>
</dbReference>
<dbReference type="SUPFAM" id="SSF56112">
    <property type="entry name" value="Protein kinase-like (PK-like)"/>
    <property type="match status" value="1"/>
</dbReference>
<dbReference type="SUPFAM" id="SSF55550">
    <property type="entry name" value="SH2 domain"/>
    <property type="match status" value="2"/>
</dbReference>
<dbReference type="PROSITE" id="PS00107">
    <property type="entry name" value="PROTEIN_KINASE_ATP"/>
    <property type="match status" value="1"/>
</dbReference>
<dbReference type="PROSITE" id="PS50011">
    <property type="entry name" value="PROTEIN_KINASE_DOM"/>
    <property type="match status" value="1"/>
</dbReference>
<dbReference type="PROSITE" id="PS00109">
    <property type="entry name" value="PROTEIN_KINASE_TYR"/>
    <property type="match status" value="1"/>
</dbReference>
<dbReference type="PROSITE" id="PS50001">
    <property type="entry name" value="SH2"/>
    <property type="match status" value="2"/>
</dbReference>
<accession>Q00655</accession>
<name>KSYK_PIG</name>
<proteinExistence type="evidence at protein level"/>
<evidence type="ECO:0000250" key="1"/>
<evidence type="ECO:0000250" key="2">
    <source>
        <dbReference type="UniProtKB" id="P43405"/>
    </source>
</evidence>
<evidence type="ECO:0000250" key="3">
    <source>
        <dbReference type="UniProtKB" id="P48025"/>
    </source>
</evidence>
<evidence type="ECO:0000255" key="4">
    <source>
        <dbReference type="PROSITE-ProRule" id="PRU00159"/>
    </source>
</evidence>
<evidence type="ECO:0000255" key="5">
    <source>
        <dbReference type="PROSITE-ProRule" id="PRU00191"/>
    </source>
</evidence>
<evidence type="ECO:0000255" key="6">
    <source>
        <dbReference type="PROSITE-ProRule" id="PRU10028"/>
    </source>
</evidence>
<evidence type="ECO:0000256" key="7">
    <source>
        <dbReference type="SAM" id="MobiDB-lite"/>
    </source>
</evidence>
<evidence type="ECO:0000269" key="8">
    <source>
    </source>
</evidence>
<evidence type="ECO:0000269" key="9">
    <source>
    </source>
</evidence>
<evidence type="ECO:0000269" key="10">
    <source>
    </source>
</evidence>
<evidence type="ECO:0000269" key="11">
    <source>
    </source>
</evidence>
<evidence type="ECO:0000305" key="12"/>
<comment type="function">
    <text evidence="2 3 8 9 11">Non-receptor tyrosine kinase which mediates signal transduction downstream of a variety of transmembrane receptors including classical immunoreceptors like the B-cell receptor (BCR). Regulates several biological processes including innate and adaptive immunity, cell adhesion, osteoclast maturation, platelet activation and vascular development. Assembles into signaling complexes with activated receptors at the plasma membrane via interaction between its SH2 domains and the receptor tyrosine-phosphorylated ITAM domains. The association with the receptor can also be indirect and mediated by adapter proteins containing ITAM or partial hemITAM domains. The phosphorylation of the ITAM domains is generally mediated by SRC subfamily kinases upon engagement of the receptor. More rarely signal transduction via SYK could be ITAM-independent. Direct downstream effectors phosphorylated by SYK include DEPTOR, VAV1, PLCG1, PI-3-kinase, LCP2 and BLNK. Initially identified as essential in B-cell receptor (BCR) signaling, it is necessary for the maturation of B-cells most probably at the pro-B to pre-B transition. Activated upon BCR engagement, it phosphorylates and activates BLNK an adapter linking the activated BCR to downstream signaling adapters and effectors. It also phosphorylates and activates PLCG1 and the PKC signaling pathway. It also phosphorylates BTK and regulates its activity in B-cell antigen receptor (BCR)-coupled signaling. In addition to its function downstream of BCR also plays a role in T-cell receptor signaling. Plays also a crucial role in the innate immune response to fungal, bacterial and viral pathogens. It is for instance activated by the membrane lectin CLEC7A. Upon stimulation by fungal proteins, CLEC7A together with SYK activates immune cells inducing the production of ROS. Also activates the inflammasome and NF-kappa-B-mediated transcription of chemokines and cytokines in presence of pathogens. Regulates neutrophil degranulation and phagocytosis through activation of the MAPK signaling cascade. Required for the stimulation of neutrophil phagocytosis by IL15 (By similarity). Also mediates the activation of dendritic cells by cell necrosis stimuli. Also involved in mast cells activation. Involved in interleukin-3/IL3-mediated signaling pathway in basophils (By similarity). Also functions downstream of receptors mediating cell adhesion. Relays for instance, integrin-mediated neutrophils and macrophages activation and P-selectin receptor/SELPG-mediated recruitment of leukocytes to inflammatory loci. Also plays a role in non-immune processes. It is for instance involved in vascular development where it may regulate blood and lymphatic vascular separation. It is also required for osteoclast development and function. Functions in the activation of platelets by collagen, mediating PLCG2 phosphorylation and activation. May be coupled to the collagen receptor by the ITAM domain-containing FCER1G. Also activated by the membrane lectin CLEC1B that is required for activation of platelets by PDPN/podoplanin. Involved in platelet adhesion being activated by ITGB3 engaged by fibrinogen. Together with CEACAM20, enhances production of the cytokine CXCL8/IL-8 via the NFKB pathway and may thus have a role in the intestinal immune response (By similarity).</text>
</comment>
<comment type="catalytic activity">
    <reaction evidence="6">
        <text>L-tyrosyl-[protein] + ATP = O-phospho-L-tyrosyl-[protein] + ADP + H(+)</text>
        <dbReference type="Rhea" id="RHEA:10596"/>
        <dbReference type="Rhea" id="RHEA-COMP:10136"/>
        <dbReference type="Rhea" id="RHEA-COMP:20101"/>
        <dbReference type="ChEBI" id="CHEBI:15378"/>
        <dbReference type="ChEBI" id="CHEBI:30616"/>
        <dbReference type="ChEBI" id="CHEBI:46858"/>
        <dbReference type="ChEBI" id="CHEBI:61978"/>
        <dbReference type="ChEBI" id="CHEBI:456216"/>
        <dbReference type="EC" id="2.7.10.2"/>
    </reaction>
</comment>
<comment type="activity regulation">
    <text evidence="1 9 10">Autoinhibited. Intramolecular binding of the interdomains A and B (also called linker region) to parts of the catalytic domain keep the catalytic center in an inactive conformation. The phosphorylation of the interdomains or the binding of the SH2 domains with dually phosphorylated ITAM domains on transmembrane proteins disrupt those intramolecular interactions allowing the kinase domain to adopt an active conformation. The phosphorylation of SYK and of the ITAM domains which is responsible for SYK activation is essentially mediated by SRC subfamily kinases, like LYN, upon transmembrane receptors engagement (By similarity). May also be negatively regulated by PTPN6 through dephosphorylation (By similarity). Downstream signaling adapters and intermediates like BLNK or RHOH may mediate positive and/or negative feedback regulation (By similarity). Negatively regulated by CBL and CBLB through ubiquitination and probable degradation (By similarity). Phosphorylates SH3BP2 which in turn may regulate SYK through LYN.</text>
</comment>
<comment type="subunit">
    <text evidence="2 3">Interacts with LYN; phosphorylates SYK. Interacts with RHOH (phosphorylated); regulates mast cells activation (By similarity). Interacts with NFAM1 (phosphorylated); probably involved in BCR signaling (By similarity). Interacts with VAV1 (via SH2 domain); phosphorylates VAV1 upon BCR activation. Interacts with GAB2 (phosphorylated); probably involved in IgE Fc receptor signaling (By similarity). Interacts (via its SH2 domains) with CD79A (via its phosphorylated ITAM domain); the interaction stimulates SYK autophosphorylation and activation (By similarity). Interacts (via SH2 domains) with FCER1G (via ITAM domain); activates SYK and mediates neutrophils and macrophages integrin-mediated activation (By similarity). Interaction with FCER1G in basophils triggers IL3-induced IL4 production (By similarity). Interacts with ITGB2 and FGR; involved in ITGB2 downstream signaling (By similarity). Interacts with ITGB3; upon activation by ITGB3 promotes platelet adhesion (By similarity). Interacts (via SH2 domains) with TYROBP (via ITAM domain); involved in neutrophils and macrophages integrin-mediated activation (By similarity). Interacts with MSN and SELPLG; mediates the selectin-dependent activation of SYK by SELPLG (By similarity). Interacts with BLNK (via SH2 domain) (By similarity). Interacts (via the second SH2 domain) with USP25 (via C-terminus); phosphorylates USP25 and regulates USP25 intracellular levels (By similarity). Interacts (via SH2 domains) with CLEC1B (dimer) (By similarity). Interacts with CLEC7A; participates in leukocyte activation in presence of fungal pathogens (By similarity). Interacts (phosphorylated) with SLA; may regulate SYK through CBL recruitment (By similarity). Interacts with YWHAG; attenuates BCR-induced membrane translocation and activation of SYK (By similarity). Interacts (via SH2 domains) with GCSAM; the interaction increases after B-cell receptor stimulation, resulting in enhanced SYK autophosphorylation and activity (By similarity). Interacts with TNS2; leading to the phosphorylation of SYK (By similarity). Interacts with FLNA (via filamin repeat 5); docks SYK to the plasma membrane (By similarity). Interacts with CEACAM1; lipopolysaccharide activated neutrophils induce phosphorylation of SYK resulting in the formation of a complex including TLR4 and the phosphorylated form of SYK and CEACAM1, which in turn, recruits PTPN6 that dephosphorylates SYK, reducing the production of reactive oxygen species (ROS) and lysosome disruption, which in turn, reduces the activity of the inflammasome (By similarity). Interacts (via SH2 domains) with CEACAM20 (phosphorylated form); the interaction further enhances CEACAM20 phosphorylation (By similarity). Interacts with IL15RA (By similarity). Interacts with MPL/TPOR; this interaction negatively regulates THPO-mediated ERK1/2 signaling (By similarity).</text>
</comment>
<comment type="subcellular location">
    <molecule>72 kDa tyrosine-protein kinase SYK</molecule>
    <subcellularLocation>
        <location evidence="12">Cell membrane</location>
    </subcellularLocation>
    <subcellularLocation>
        <location>Cytoplasm</location>
        <location>Cytosol</location>
    </subcellularLocation>
    <text>Mainly associated with membranes.</text>
</comment>
<comment type="subcellular location">
    <molecule>40 kDa tyrosine-protein kinase SYK</molecule>
    <subcellularLocation>
        <location evidence="12">Cell membrane</location>
    </subcellularLocation>
    <subcellularLocation>
        <location>Cytoplasm</location>
        <location>Cytosol</location>
    </subcellularLocation>
    <text>Equally distributed between membranes and cytosol.</text>
</comment>
<comment type="tissue specificity">
    <text>Spleen and with lesser amounts in thymus.</text>
</comment>
<comment type="domain">
    <text evidence="1">The SH2 domains mediate the interaction of SYK with the phosphorylated ITAM domains of transmembrane proteins. Some proteins like CLEC1B have a partial ITAM domain (also called hemITAM) containing a single YxxL motif. The interaction with SYK requires CLEC1B homodimerization (By similarity).</text>
</comment>
<comment type="PTM">
    <text evidence="1 2">Autophosphorylated. Phosphorylated on tyrosine residues by LYN following receptors engagement. Phosphorylation on Tyr-316 creates a binding site for CBL, an adapter protein that serves as a negative regulator of BCR-stimulated calcium ion signaling. Phosphorylation at Tyr-341 creates a binding site for VAV1 (By similarity). Phosphorylation on Tyr-341 and Tyr-345 enhances the phosphorylation and activation of phospholipase C-gamma and the early phase of calcium ion mobilization via a phosphoinositide 3-kinase-independent pathway (By similarity). Phosphorylated on tyrosine residues in response to IL15 (By similarity). Phosphorylation on Ser-290 is very common, it peaks 5 minutes after BCR stimulation, and creates a binding site for YWHAG (By similarity). Phosphorylation at Tyr-623 creates a binding site for BLNK (By similarity). Dephosphorylated by PTPN6 (By similarity).</text>
</comment>
<comment type="PTM">
    <text>Shows high susceptibility to proteolysis.</text>
</comment>
<comment type="PTM">
    <text evidence="1">Ubiquitinated by CBLB after BCR activation; which promotes proteasomal degradation.</text>
</comment>
<comment type="similarity">
    <text evidence="4">Belongs to the protein kinase superfamily. Tyr protein kinase family. SYK/ZAP-70 subfamily.</text>
</comment>
<keyword id="KW-1064">Adaptive immunity</keyword>
<keyword id="KW-0037">Angiogenesis</keyword>
<keyword id="KW-0067">ATP-binding</keyword>
<keyword id="KW-1003">Cell membrane</keyword>
<keyword id="KW-0963">Cytoplasm</keyword>
<keyword id="KW-0903">Direct protein sequencing</keyword>
<keyword id="KW-0391">Immunity</keyword>
<keyword id="KW-0399">Innate immunity</keyword>
<keyword id="KW-0418">Kinase</keyword>
<keyword id="KW-0472">Membrane</keyword>
<keyword id="KW-0547">Nucleotide-binding</keyword>
<keyword id="KW-0597">Phosphoprotein</keyword>
<keyword id="KW-1185">Reference proteome</keyword>
<keyword id="KW-0677">Repeat</keyword>
<keyword id="KW-0727">SH2 domain</keyword>
<keyword id="KW-0808">Transferase</keyword>
<keyword id="KW-0829">Tyrosine-protein kinase</keyword>
<keyword id="KW-0832">Ubl conjugation</keyword>
<feature type="chain" id="PRO_0000024468" description="72 kDa tyrosine-protein kinase SYK">
    <location>
        <begin position="1"/>
        <end position="628"/>
    </location>
</feature>
<feature type="chain" id="PRO_0000024469" description="40 kDa tyrosine-protein kinase SYK">
    <location>
        <begin position="313"/>
        <end position="628"/>
    </location>
</feature>
<feature type="domain" description="SH2 1" evidence="5">
    <location>
        <begin position="10"/>
        <end position="102"/>
    </location>
</feature>
<feature type="domain" description="SH2 2" evidence="5">
    <location>
        <begin position="163"/>
        <end position="253"/>
    </location>
</feature>
<feature type="domain" description="Protein kinase" evidence="4">
    <location>
        <begin position="364"/>
        <end position="624"/>
    </location>
</feature>
<feature type="region of interest" description="Interdomain A" evidence="1">
    <location>
        <begin position="103"/>
        <end position="162"/>
    </location>
</feature>
<feature type="region of interest" description="Interdomain B" evidence="1">
    <location>
        <begin position="254"/>
        <end position="363"/>
    </location>
</feature>
<feature type="region of interest" description="Disordered" evidence="7">
    <location>
        <begin position="293"/>
        <end position="312"/>
    </location>
</feature>
<feature type="active site" description="Proton acceptor" evidence="4 6">
    <location>
        <position position="487"/>
    </location>
</feature>
<feature type="binding site" evidence="4">
    <location>
        <begin position="370"/>
        <end position="378"/>
    </location>
    <ligand>
        <name>ATP</name>
        <dbReference type="ChEBI" id="CHEBI:30616"/>
    </ligand>
</feature>
<feature type="binding site" evidence="4">
    <location>
        <position position="395"/>
    </location>
    <ligand>
        <name>ATP</name>
        <dbReference type="ChEBI" id="CHEBI:30616"/>
    </ligand>
</feature>
<feature type="modified residue" description="Phosphotyrosine" evidence="2">
    <location>
        <position position="23"/>
    </location>
</feature>
<feature type="modified residue" description="Phosphoserine" evidence="2">
    <location>
        <position position="39"/>
    </location>
</feature>
<feature type="modified residue" description="Phosphotyrosine" evidence="2">
    <location>
        <position position="42"/>
    </location>
</feature>
<feature type="modified residue" description="Phosphotyrosine" evidence="2">
    <location>
        <position position="126"/>
    </location>
</feature>
<feature type="modified residue" description="Phosphoserine" evidence="2">
    <location>
        <position position="196"/>
    </location>
</feature>
<feature type="modified residue" description="Phosphothreonine" evidence="2">
    <location>
        <position position="250"/>
    </location>
</feature>
<feature type="modified residue" description="Phosphoserine" evidence="2">
    <location>
        <position position="288"/>
    </location>
</feature>
<feature type="modified residue" description="Phosphotyrosine" evidence="2">
    <location>
        <position position="289"/>
    </location>
</feature>
<feature type="modified residue" description="Phosphoserine" evidence="2">
    <location>
        <position position="290"/>
    </location>
</feature>
<feature type="modified residue" description="Phosphoserine" evidence="2">
    <location>
        <position position="309"/>
    </location>
</feature>
<feature type="modified residue" description="Phosphoserine" evidence="2">
    <location>
        <position position="312"/>
    </location>
</feature>
<feature type="modified residue" description="Phosphotyrosine; by LYN" evidence="2">
    <location>
        <position position="316"/>
    </location>
</feature>
<feature type="modified residue" description="Phosphothreonine" evidence="2">
    <location>
        <position position="338"/>
    </location>
</feature>
<feature type="modified residue" description="Phosphotyrosine" evidence="11">
    <location>
        <position position="341"/>
    </location>
</feature>
<feature type="modified residue" description="Phosphoserine" evidence="2">
    <location>
        <position position="343"/>
    </location>
</feature>
<feature type="modified residue" description="Phosphotyrosine" evidence="2">
    <location>
        <position position="345"/>
    </location>
</feature>
<feature type="modified residue" description="Phosphotyrosine" evidence="2">
    <location>
        <position position="357"/>
    </location>
</feature>
<feature type="modified residue" description="Phosphoserine" evidence="2">
    <location>
        <position position="372"/>
    </location>
</feature>
<feature type="modified residue" description="Phosphothreonine" evidence="2">
    <location>
        <position position="377"/>
    </location>
</feature>
<feature type="modified residue" description="Phosphotyrosine" evidence="2">
    <location>
        <position position="477"/>
    </location>
</feature>
<feature type="modified residue" description="Phosphotyrosine" evidence="2">
    <location>
        <position position="500"/>
    </location>
</feature>
<feature type="modified residue" description="Phosphotyrosine; by autocatalysis" evidence="2">
    <location>
        <position position="518"/>
    </location>
</feature>
<feature type="modified residue" description="Phosphotyrosine" evidence="2">
    <location>
        <position position="519"/>
    </location>
</feature>
<feature type="modified residue" description="Phosphothreonine" evidence="2">
    <location>
        <position position="523"/>
    </location>
</feature>
<feature type="modified residue" description="Phosphotyrosine" evidence="3">
    <location>
        <position position="539"/>
    </location>
</feature>
<feature type="modified residue" description="Phosphoserine" evidence="2">
    <location>
        <position position="572"/>
    </location>
</feature>
<feature type="modified residue" description="Phosphotyrosine" evidence="2">
    <location>
        <position position="622"/>
    </location>
</feature>
<feature type="modified residue" description="Phosphotyrosine" evidence="2">
    <location>
        <position position="623"/>
    </location>
</feature>
<feature type="modified residue" description="Phosphotyrosine" evidence="2">
    <location>
        <position position="624"/>
    </location>
</feature>
<feature type="mutagenesis site" description="Alters interaction with VAV1." evidence="11">
    <original>Y</original>
    <variation>F</variation>
    <location>
        <position position="341"/>
    </location>
</feature>
<feature type="mutagenesis site" description="Moderately alters interaction with VAV1." evidence="11">
    <original>Y</original>
    <variation>F</variation>
    <location>
        <position position="345"/>
    </location>
</feature>
<feature type="mutagenesis site" description="Loss of kinase activity." evidence="9">
    <original>K</original>
    <variation>R</variation>
    <location>
        <position position="395"/>
    </location>
</feature>
<reference key="1">
    <citation type="journal article" date="1991" name="J. Biol. Chem.">
        <title>Molecular cloning of a porcine gene syk that encodes a 72-kDa protein-tyrosine kinase showing high susceptibility to proteolysis.</title>
        <authorList>
            <person name="Taniguchi T."/>
            <person name="Kobayashi T."/>
            <person name="Kondo J."/>
            <person name="Takahashi K."/>
            <person name="Nakamura H."/>
            <person name="Suzuki J."/>
            <person name="Nagai K."/>
            <person name="Yamada T."/>
            <person name="Nakamura S."/>
            <person name="Yamamura H."/>
        </authorList>
    </citation>
    <scope>NUCLEOTIDE SEQUENCE [MRNA]</scope>
    <scope>PROTEIN SEQUENCE OF 313-333; 346-354 AND 369-379</scope>
    <source>
        <tissue>Spleen</tissue>
    </source>
</reference>
<reference key="2">
    <citation type="journal article" date="1994" name="J. Exp. Med.">
        <title>Syk activation by the Src-family tyrosine kinase in the B cell receptor signaling.</title>
        <authorList>
            <person name="Kurosaki T."/>
            <person name="Takata M."/>
            <person name="Yamanashi Y."/>
            <person name="Inazu T."/>
            <person name="Taniguchi T."/>
            <person name="Yamamoto T."/>
            <person name="Yamamura H."/>
        </authorList>
    </citation>
    <scope>PHOSPHORYLATION BY LYN</scope>
    <scope>INTERACTION WITH LYN</scope>
    <scope>AUTOPHOSPHORYLATION</scope>
</reference>
<reference key="3">
    <citation type="journal article" date="1996" name="Immunity">
        <title>Functional and physical interactions of Syk family kinases with the Vav proto-oncogene product.</title>
        <authorList>
            <person name="Deckert M."/>
            <person name="Tartare-Deckert S."/>
            <person name="Couture C."/>
            <person name="Mustelin T."/>
            <person name="Altman A."/>
        </authorList>
    </citation>
    <scope>FUNCTION IN TRANSCRIPTION REGULATION</scope>
    <scope>INTERACTION WITH VAV1</scope>
    <scope>MUTAGENESIS OF TYR-341 AND TYR-345</scope>
    <scope>PHOSPHORYLATION AT TYR-341</scope>
</reference>
<reference key="4">
    <citation type="journal article" date="2001" name="Proc. Natl. Acad. Sci. U.S.A.">
        <title>BLNK mediates Syk-dependent Btk activation.</title>
        <authorList>
            <person name="Baba Y."/>
            <person name="Hashimoto S."/>
            <person name="Matsushita M."/>
            <person name="Watanabe D."/>
            <person name="Kishimoto T."/>
            <person name="Kurosaki T."/>
            <person name="Tsukada S."/>
        </authorList>
    </citation>
    <scope>FUNCTION IN PHOSPHORYLATION OF BTK</scope>
</reference>
<reference key="5">
    <citation type="journal article" date="2003" name="J. Biol. Chem.">
        <title>Adaptor protein 3BP2 is a potential ligand of Src homology 2 and 3 domains of Lyn protein-tyrosine kinase.</title>
        <authorList>
            <person name="Maeno K."/>
            <person name="Sada K."/>
            <person name="Kyo S."/>
            <person name="Miah S.M."/>
            <person name="Kawauchi-Kamata K."/>
            <person name="Qu X."/>
            <person name="Shi Y."/>
            <person name="Yamamura H."/>
        </authorList>
    </citation>
    <scope>FUNCTION IN PHOSPHORYLATION OF SH3BP2</scope>
    <scope>MUTAGENESIS OF LYS-395</scope>
    <scope>ACTIVITY REGULATION</scope>
</reference>
<reference key="6">
    <citation type="journal article" date="2007" name="Biochem. Biophys. Res. Commun.">
        <title>Interdomain A is crucial for ITAM-dependent and -independent regulation of Syk.</title>
        <authorList>
            <person name="Adachi T."/>
            <person name="Wienands J."/>
            <person name="Tsubata T."/>
            <person name="Kurosaki T."/>
        </authorList>
    </citation>
    <scope>ACTIVITY REGULATION</scope>
</reference>
<organism>
    <name type="scientific">Sus scrofa</name>
    <name type="common">Pig</name>
    <dbReference type="NCBI Taxonomy" id="9823"/>
    <lineage>
        <taxon>Eukaryota</taxon>
        <taxon>Metazoa</taxon>
        <taxon>Chordata</taxon>
        <taxon>Craniata</taxon>
        <taxon>Vertebrata</taxon>
        <taxon>Euteleostomi</taxon>
        <taxon>Mammalia</taxon>
        <taxon>Eutheria</taxon>
        <taxon>Laurasiatheria</taxon>
        <taxon>Artiodactyla</taxon>
        <taxon>Suina</taxon>
        <taxon>Suidae</taxon>
        <taxon>Sus</taxon>
    </lineage>
</organism>
<sequence length="628" mass="71620">MADSANHLPFFFGQITREEAEDYLVQGGMSDGLYLLRQSRNYLGGFALSVAYDRKAHHYTIERELNGTYAISGGRTHGSPAELCHYHSQELDGLVCLLKNPFNRPPGVQPKTGPFEDLKENLIREYVKQTWNLQGQALEQAIISQKPQLEKLIATTAHEKMPWFHGKISRDESEQIVLIGSKTNGKFLIRARDNGSYALGLLHEGKVLHYRIDKDKTGKLSIPGGKNFDTLWQLVEHYSYKSDGLLRVLTVPCQKIGGQTGNDSFRPQLPSAHPATWSAGGIISRIKSYSFPKPGHRKASSPQGNRPESLVSYNPYESDRGPWANEREAQREALPMDTEVYESPYADPEEIRPKEVYLDRKLLTLEDKELGSGNFGTVKKGYYQMKKVVKTVAVKILKNEANDPALKDELLAEANVMQQLDNPYIVRMIGICEAESWMLVMEMAELGPLNKYLQQNRHVKDKNIIELVHQVSMGMKYLEECNFVHRDLAARNVLLVTQHYAKISDFGLSKALRADENYYKAQTHGKWPVKWYAPECINYYKFSSKSDVWSFGVLMWEAFSYGQKPYRGMKGSEVSAMLEKGERMGCPPGCPREMYELMTLCWTYDVENRPGFVAVELRLRNYYYDVVN</sequence>
<protein>
    <recommendedName>
        <fullName>Tyrosine-protein kinase SYK</fullName>
        <ecNumber>2.7.10.2</ecNumber>
    </recommendedName>
    <alternativeName>
        <fullName>Spleen tyrosine kinase</fullName>
    </alternativeName>
    <component>
        <recommendedName>
            <fullName>72 kDa tyrosine-protein kinase SYK</fullName>
        </recommendedName>
    </component>
    <component>
        <recommendedName>
            <fullName>40 kDa tyrosine-protein kinase SYK</fullName>
        </recommendedName>
    </component>
</protein>
<gene>
    <name type="primary">SYK</name>
</gene>